<comment type="function">
    <text evidence="1">Responsible for the release of ribosomes from messenger RNA at the termination of protein biosynthesis. May increase the efficiency of translation by recycling ribosomes from one round of translation to another.</text>
</comment>
<comment type="subcellular location">
    <subcellularLocation>
        <location evidence="1">Cytoplasm</location>
    </subcellularLocation>
</comment>
<comment type="similarity">
    <text evidence="1">Belongs to the RRF family.</text>
</comment>
<reference key="1">
    <citation type="journal article" date="2006" name="J. Bacteriol.">
        <title>Genome sequence of Aeromonas hydrophila ATCC 7966T: jack of all trades.</title>
        <authorList>
            <person name="Seshadri R."/>
            <person name="Joseph S.W."/>
            <person name="Chopra A.K."/>
            <person name="Sha J."/>
            <person name="Shaw J."/>
            <person name="Graf J."/>
            <person name="Haft D.H."/>
            <person name="Wu M."/>
            <person name="Ren Q."/>
            <person name="Rosovitz M.J."/>
            <person name="Madupu R."/>
            <person name="Tallon L."/>
            <person name="Kim M."/>
            <person name="Jin S."/>
            <person name="Vuong H."/>
            <person name="Stine O.C."/>
            <person name="Ali A."/>
            <person name="Horneman A.J."/>
            <person name="Heidelberg J.F."/>
        </authorList>
    </citation>
    <scope>NUCLEOTIDE SEQUENCE [LARGE SCALE GENOMIC DNA]</scope>
    <source>
        <strain>ATCC 7966 / DSM 30187 / BCRC 13018 / CCUG 14551 / JCM 1027 / KCTC 2358 / NCIMB 9240 / NCTC 8049</strain>
    </source>
</reference>
<gene>
    <name evidence="1" type="primary">frr</name>
    <name type="ordered locus">AHA_1176</name>
</gene>
<name>RRF_AERHH</name>
<protein>
    <recommendedName>
        <fullName evidence="1">Ribosome-recycling factor</fullName>
        <shortName evidence="1">RRF</shortName>
    </recommendedName>
    <alternativeName>
        <fullName evidence="1">Ribosome-releasing factor</fullName>
    </alternativeName>
</protein>
<organism>
    <name type="scientific">Aeromonas hydrophila subsp. hydrophila (strain ATCC 7966 / DSM 30187 / BCRC 13018 / CCUG 14551 / JCM 1027 / KCTC 2358 / NCIMB 9240 / NCTC 8049)</name>
    <dbReference type="NCBI Taxonomy" id="380703"/>
    <lineage>
        <taxon>Bacteria</taxon>
        <taxon>Pseudomonadati</taxon>
        <taxon>Pseudomonadota</taxon>
        <taxon>Gammaproteobacteria</taxon>
        <taxon>Aeromonadales</taxon>
        <taxon>Aeromonadaceae</taxon>
        <taxon>Aeromonas</taxon>
    </lineage>
</organism>
<evidence type="ECO:0000255" key="1">
    <source>
        <dbReference type="HAMAP-Rule" id="MF_00040"/>
    </source>
</evidence>
<feature type="chain" id="PRO_1000003099" description="Ribosome-recycling factor">
    <location>
        <begin position="1"/>
        <end position="185"/>
    </location>
</feature>
<proteinExistence type="inferred from homology"/>
<dbReference type="EMBL" id="CP000462">
    <property type="protein sequence ID" value="ABK37691.1"/>
    <property type="molecule type" value="Genomic_DNA"/>
</dbReference>
<dbReference type="RefSeq" id="WP_011705096.1">
    <property type="nucleotide sequence ID" value="NC_008570.1"/>
</dbReference>
<dbReference type="RefSeq" id="YP_855717.1">
    <property type="nucleotide sequence ID" value="NC_008570.1"/>
</dbReference>
<dbReference type="SMR" id="A0KHG6"/>
<dbReference type="STRING" id="380703.AHA_1176"/>
<dbReference type="EnsemblBacteria" id="ABK37691">
    <property type="protein sequence ID" value="ABK37691"/>
    <property type="gene ID" value="AHA_1176"/>
</dbReference>
<dbReference type="GeneID" id="4487251"/>
<dbReference type="KEGG" id="aha:AHA_1176"/>
<dbReference type="PATRIC" id="fig|380703.7.peg.1183"/>
<dbReference type="eggNOG" id="COG0233">
    <property type="taxonomic scope" value="Bacteria"/>
</dbReference>
<dbReference type="HOGENOM" id="CLU_073981_2_1_6"/>
<dbReference type="OrthoDB" id="9804006at2"/>
<dbReference type="Proteomes" id="UP000000756">
    <property type="component" value="Chromosome"/>
</dbReference>
<dbReference type="GO" id="GO:0005829">
    <property type="term" value="C:cytosol"/>
    <property type="evidence" value="ECO:0007669"/>
    <property type="project" value="GOC"/>
</dbReference>
<dbReference type="GO" id="GO:0043023">
    <property type="term" value="F:ribosomal large subunit binding"/>
    <property type="evidence" value="ECO:0007669"/>
    <property type="project" value="TreeGrafter"/>
</dbReference>
<dbReference type="GO" id="GO:0002184">
    <property type="term" value="P:cytoplasmic translational termination"/>
    <property type="evidence" value="ECO:0007669"/>
    <property type="project" value="TreeGrafter"/>
</dbReference>
<dbReference type="CDD" id="cd00520">
    <property type="entry name" value="RRF"/>
    <property type="match status" value="1"/>
</dbReference>
<dbReference type="FunFam" id="1.10.132.20:FF:000001">
    <property type="entry name" value="Ribosome-recycling factor"/>
    <property type="match status" value="1"/>
</dbReference>
<dbReference type="FunFam" id="3.30.1360.40:FF:000001">
    <property type="entry name" value="Ribosome-recycling factor"/>
    <property type="match status" value="1"/>
</dbReference>
<dbReference type="Gene3D" id="3.30.1360.40">
    <property type="match status" value="1"/>
</dbReference>
<dbReference type="Gene3D" id="1.10.132.20">
    <property type="entry name" value="Ribosome-recycling factor"/>
    <property type="match status" value="1"/>
</dbReference>
<dbReference type="HAMAP" id="MF_00040">
    <property type="entry name" value="RRF"/>
    <property type="match status" value="1"/>
</dbReference>
<dbReference type="InterPro" id="IPR002661">
    <property type="entry name" value="Ribosome_recyc_fac"/>
</dbReference>
<dbReference type="InterPro" id="IPR023584">
    <property type="entry name" value="Ribosome_recyc_fac_dom"/>
</dbReference>
<dbReference type="InterPro" id="IPR036191">
    <property type="entry name" value="RRF_sf"/>
</dbReference>
<dbReference type="NCBIfam" id="TIGR00496">
    <property type="entry name" value="frr"/>
    <property type="match status" value="1"/>
</dbReference>
<dbReference type="PANTHER" id="PTHR20982:SF3">
    <property type="entry name" value="MITOCHONDRIAL RIBOSOME RECYCLING FACTOR PSEUDO 1"/>
    <property type="match status" value="1"/>
</dbReference>
<dbReference type="PANTHER" id="PTHR20982">
    <property type="entry name" value="RIBOSOME RECYCLING FACTOR"/>
    <property type="match status" value="1"/>
</dbReference>
<dbReference type="Pfam" id="PF01765">
    <property type="entry name" value="RRF"/>
    <property type="match status" value="1"/>
</dbReference>
<dbReference type="SUPFAM" id="SSF55194">
    <property type="entry name" value="Ribosome recycling factor, RRF"/>
    <property type="match status" value="1"/>
</dbReference>
<keyword id="KW-0963">Cytoplasm</keyword>
<keyword id="KW-0648">Protein biosynthesis</keyword>
<keyword id="KW-1185">Reference proteome</keyword>
<accession>A0KHG6</accession>
<sequence>MINEIKNDAKDRMAKSVESLKTQMSKIRTGRAHPSLLDGIQVEYYGAATPLKQLANVVAEDARTLSISIFDRSMIQAVEKAILTSDLGLNPSSNGQTLRVPLPPLTEERRRDLTKIVRAEAEGARVAVRNIRRDANADLKALLKDKEISEDDDRRAQEEIQKLTDSFIKLVDEALALKEKELMEI</sequence>